<name>CREL1_RAT</name>
<proteinExistence type="evidence at transcript level"/>
<dbReference type="EC" id="5.3.4.1" evidence="3"/>
<dbReference type="EMBL" id="BC097951">
    <property type="protein sequence ID" value="AAH97951.1"/>
    <property type="molecule type" value="mRNA"/>
</dbReference>
<dbReference type="RefSeq" id="NP_001019954.1">
    <property type="nucleotide sequence ID" value="NM_001024783.1"/>
</dbReference>
<dbReference type="FunCoup" id="Q4V7F2">
    <property type="interactions" value="1801"/>
</dbReference>
<dbReference type="STRING" id="10116.ENSRNOP00000013052"/>
<dbReference type="GlyCosmos" id="Q4V7F2">
    <property type="glycosylation" value="1 site, No reported glycans"/>
</dbReference>
<dbReference type="GlyGen" id="Q4V7F2">
    <property type="glycosylation" value="1 site"/>
</dbReference>
<dbReference type="PhosphoSitePlus" id="Q4V7F2"/>
<dbReference type="jPOST" id="Q4V7F2"/>
<dbReference type="PaxDb" id="10116-ENSRNOP00000013052"/>
<dbReference type="Ensembl" id="ENSRNOT00000013052.7">
    <property type="protein sequence ID" value="ENSRNOP00000013052.4"/>
    <property type="gene ID" value="ENSRNOG00000009414.7"/>
</dbReference>
<dbReference type="GeneID" id="312638"/>
<dbReference type="KEGG" id="rno:312638"/>
<dbReference type="UCSC" id="RGD:1309412">
    <property type="organism name" value="rat"/>
</dbReference>
<dbReference type="AGR" id="RGD:1309412"/>
<dbReference type="CTD" id="78987"/>
<dbReference type="RGD" id="1309412">
    <property type="gene designation" value="Creld1"/>
</dbReference>
<dbReference type="eggNOG" id="KOG4260">
    <property type="taxonomic scope" value="Eukaryota"/>
</dbReference>
<dbReference type="GeneTree" id="ENSGT00940000160255"/>
<dbReference type="HOGENOM" id="CLU_038974_1_1_1"/>
<dbReference type="InParanoid" id="Q4V7F2"/>
<dbReference type="OMA" id="HCRANQY"/>
<dbReference type="OrthoDB" id="10045365at2759"/>
<dbReference type="PhylomeDB" id="Q4V7F2"/>
<dbReference type="TreeFam" id="TF316507"/>
<dbReference type="PRO" id="PR:Q4V7F2"/>
<dbReference type="Proteomes" id="UP000002494">
    <property type="component" value="Chromosome 4"/>
</dbReference>
<dbReference type="Bgee" id="ENSRNOG00000009414">
    <property type="expression patterns" value="Expressed in skeletal muscle tissue and 20 other cell types or tissues"/>
</dbReference>
<dbReference type="GO" id="GO:0098978">
    <property type="term" value="C:glutamatergic synapse"/>
    <property type="evidence" value="ECO:0000266"/>
    <property type="project" value="RGD"/>
</dbReference>
<dbReference type="GO" id="GO:0016020">
    <property type="term" value="C:membrane"/>
    <property type="evidence" value="ECO:0007669"/>
    <property type="project" value="UniProtKB-SubCell"/>
</dbReference>
<dbReference type="GO" id="GO:0045202">
    <property type="term" value="C:synapse"/>
    <property type="evidence" value="ECO:0000266"/>
    <property type="project" value="RGD"/>
</dbReference>
<dbReference type="GO" id="GO:0005509">
    <property type="term" value="F:calcium ion binding"/>
    <property type="evidence" value="ECO:0007669"/>
    <property type="project" value="InterPro"/>
</dbReference>
<dbReference type="GO" id="GO:0003756">
    <property type="term" value="F:protein disulfide isomerase activity"/>
    <property type="evidence" value="ECO:0007669"/>
    <property type="project" value="UniProtKB-EC"/>
</dbReference>
<dbReference type="CDD" id="cd00054">
    <property type="entry name" value="EGF_CA"/>
    <property type="match status" value="1"/>
</dbReference>
<dbReference type="CDD" id="cd00064">
    <property type="entry name" value="FU"/>
    <property type="match status" value="1"/>
</dbReference>
<dbReference type="Gene3D" id="2.10.25.10">
    <property type="entry name" value="Laminin"/>
    <property type="match status" value="1"/>
</dbReference>
<dbReference type="Gene3D" id="2.90.20.10">
    <property type="entry name" value="Plasmodium vivax P25 domain"/>
    <property type="match status" value="1"/>
</dbReference>
<dbReference type="InterPro" id="IPR021852">
    <property type="entry name" value="DUF3456"/>
</dbReference>
<dbReference type="InterPro" id="IPR050751">
    <property type="entry name" value="ECM_structural_protein"/>
</dbReference>
<dbReference type="InterPro" id="IPR001881">
    <property type="entry name" value="EGF-like_Ca-bd_dom"/>
</dbReference>
<dbReference type="InterPro" id="IPR000742">
    <property type="entry name" value="EGF-like_dom"/>
</dbReference>
<dbReference type="InterPro" id="IPR000152">
    <property type="entry name" value="EGF-type_Asp/Asn_hydroxyl_site"/>
</dbReference>
<dbReference type="InterPro" id="IPR018097">
    <property type="entry name" value="EGF_Ca-bd_CS"/>
</dbReference>
<dbReference type="InterPro" id="IPR006212">
    <property type="entry name" value="Furin_repeat"/>
</dbReference>
<dbReference type="InterPro" id="IPR009030">
    <property type="entry name" value="Growth_fac_rcpt_cys_sf"/>
</dbReference>
<dbReference type="InterPro" id="IPR002049">
    <property type="entry name" value="LE_dom"/>
</dbReference>
<dbReference type="InterPro" id="IPR049883">
    <property type="entry name" value="NOTCH1_EGF-like"/>
</dbReference>
<dbReference type="PANTHER" id="PTHR24034">
    <property type="entry name" value="EGF-LIKE DOMAIN-CONTAINING PROTEIN"/>
    <property type="match status" value="1"/>
</dbReference>
<dbReference type="PANTHER" id="PTHR24034:SF209">
    <property type="entry name" value="EGF-LIKE DOMAIN-CONTAINING PROTEIN"/>
    <property type="match status" value="1"/>
</dbReference>
<dbReference type="Pfam" id="PF11938">
    <property type="entry name" value="DUF3456"/>
    <property type="match status" value="1"/>
</dbReference>
<dbReference type="Pfam" id="PF07645">
    <property type="entry name" value="EGF_CA"/>
    <property type="match status" value="2"/>
</dbReference>
<dbReference type="SMART" id="SM00181">
    <property type="entry name" value="EGF"/>
    <property type="match status" value="4"/>
</dbReference>
<dbReference type="SMART" id="SM00179">
    <property type="entry name" value="EGF_CA"/>
    <property type="match status" value="2"/>
</dbReference>
<dbReference type="SMART" id="SM00261">
    <property type="entry name" value="FU"/>
    <property type="match status" value="2"/>
</dbReference>
<dbReference type="SUPFAM" id="SSF57184">
    <property type="entry name" value="Growth factor receptor domain"/>
    <property type="match status" value="1"/>
</dbReference>
<dbReference type="PROSITE" id="PS00010">
    <property type="entry name" value="ASX_HYDROXYL"/>
    <property type="match status" value="1"/>
</dbReference>
<dbReference type="PROSITE" id="PS00022">
    <property type="entry name" value="EGF_1"/>
    <property type="match status" value="1"/>
</dbReference>
<dbReference type="PROSITE" id="PS01186">
    <property type="entry name" value="EGF_2"/>
    <property type="match status" value="2"/>
</dbReference>
<dbReference type="PROSITE" id="PS50026">
    <property type="entry name" value="EGF_3"/>
    <property type="match status" value="2"/>
</dbReference>
<dbReference type="PROSITE" id="PS01187">
    <property type="entry name" value="EGF_CA"/>
    <property type="match status" value="2"/>
</dbReference>
<feature type="signal peptide" evidence="4">
    <location>
        <begin position="1"/>
        <end position="29"/>
    </location>
</feature>
<feature type="chain" id="PRO_0000042783" description="Protein disulfide isomerase Creld1">
    <location>
        <begin position="30"/>
        <end position="420"/>
    </location>
</feature>
<feature type="topological domain" description="Extracellular" evidence="4">
    <location>
        <begin position="30"/>
        <end position="362"/>
    </location>
</feature>
<feature type="transmembrane region" description="Helical" evidence="4">
    <location>
        <begin position="363"/>
        <end position="383"/>
    </location>
</feature>
<feature type="topological domain" description="Cytoplasmic" evidence="4">
    <location>
        <position position="384"/>
    </location>
</feature>
<feature type="transmembrane region" description="Helical" evidence="4">
    <location>
        <begin position="385"/>
        <end position="405"/>
    </location>
</feature>
<feature type="topological domain" description="Extracellular" evidence="4">
    <location>
        <begin position="406"/>
        <end position="420"/>
    </location>
</feature>
<feature type="domain" description="EGF-like 1" evidence="5">
    <location>
        <begin position="153"/>
        <end position="193"/>
    </location>
</feature>
<feature type="repeat" description="FU 1">
    <location>
        <begin position="208"/>
        <end position="255"/>
    </location>
</feature>
<feature type="repeat" description="FU 2">
    <location>
        <begin position="268"/>
        <end position="315"/>
    </location>
</feature>
<feature type="domain" description="EGF-like 2; calcium-binding" evidence="5">
    <location>
        <begin position="305"/>
        <end position="342"/>
    </location>
</feature>
<feature type="short sequence motif" description="CXXC" evidence="1">
    <location>
        <begin position="46"/>
        <end position="49"/>
    </location>
</feature>
<feature type="short sequence motif" description="CXXC" evidence="3">
    <location>
        <begin position="278"/>
        <end position="281"/>
    </location>
</feature>
<feature type="glycosylation site" description="N-linked (GlcNAc...) asparagine" evidence="4">
    <location>
        <position position="205"/>
    </location>
</feature>
<feature type="disulfide bond" description="Redox-active" evidence="3">
    <location>
        <begin position="46"/>
        <end position="49"/>
    </location>
</feature>
<feature type="disulfide bond" evidence="5">
    <location>
        <begin position="155"/>
        <end position="169"/>
    </location>
</feature>
<feature type="disulfide bond" evidence="5">
    <location>
        <begin position="163"/>
        <end position="181"/>
    </location>
</feature>
<feature type="disulfide bond" evidence="5">
    <location>
        <begin position="183"/>
        <end position="192"/>
    </location>
</feature>
<feature type="disulfide bond" description="Redox-active" evidence="3">
    <location>
        <begin position="278"/>
        <end position="281"/>
    </location>
</feature>
<feature type="disulfide bond" evidence="5">
    <location>
        <begin position="309"/>
        <end position="321"/>
    </location>
</feature>
<feature type="disulfide bond" evidence="5">
    <location>
        <begin position="314"/>
        <end position="330"/>
    </location>
</feature>
<feature type="disulfide bond" evidence="5">
    <location>
        <begin position="332"/>
        <end position="343"/>
    </location>
</feature>
<organism>
    <name type="scientific">Rattus norvegicus</name>
    <name type="common">Rat</name>
    <dbReference type="NCBI Taxonomy" id="10116"/>
    <lineage>
        <taxon>Eukaryota</taxon>
        <taxon>Metazoa</taxon>
        <taxon>Chordata</taxon>
        <taxon>Craniata</taxon>
        <taxon>Vertebrata</taxon>
        <taxon>Euteleostomi</taxon>
        <taxon>Mammalia</taxon>
        <taxon>Eutheria</taxon>
        <taxon>Euarchontoglires</taxon>
        <taxon>Glires</taxon>
        <taxon>Rodentia</taxon>
        <taxon>Myomorpha</taxon>
        <taxon>Muroidea</taxon>
        <taxon>Muridae</taxon>
        <taxon>Murinae</taxon>
        <taxon>Rattus</taxon>
    </lineage>
</organism>
<reference key="1">
    <citation type="journal article" date="2004" name="Genome Res.">
        <title>The status, quality, and expansion of the NIH full-length cDNA project: the Mammalian Gene Collection (MGC).</title>
        <authorList>
            <consortium name="The MGC Project Team"/>
        </authorList>
    </citation>
    <scope>NUCLEOTIDE SEQUENCE [LARGE SCALE MRNA]</scope>
    <source>
        <tissue>Placenta</tissue>
    </source>
</reference>
<evidence type="ECO:0000250" key="1">
    <source>
        <dbReference type="UniProtKB" id="Q19267"/>
    </source>
</evidence>
<evidence type="ECO:0000250" key="2">
    <source>
        <dbReference type="UniProtKB" id="Q91XD7"/>
    </source>
</evidence>
<evidence type="ECO:0000250" key="3">
    <source>
        <dbReference type="UniProtKB" id="Q9CYA0"/>
    </source>
</evidence>
<evidence type="ECO:0000255" key="4"/>
<evidence type="ECO:0000255" key="5">
    <source>
        <dbReference type="PROSITE-ProRule" id="PRU00076"/>
    </source>
</evidence>
<evidence type="ECO:0000305" key="6"/>
<protein>
    <recommendedName>
        <fullName evidence="6">Protein disulfide isomerase Creld1</fullName>
        <ecNumber evidence="3">5.3.4.1</ecNumber>
    </recommendedName>
    <alternativeName>
        <fullName evidence="6">Cysteine-rich with EGF-like domain protein 1</fullName>
    </alternativeName>
</protein>
<comment type="function">
    <text evidence="2 3">Protein disulfide isomerase (By similarity). Promotes the localization of acetylcholine receptors (AChRs) to the plasma membrane (By similarity).</text>
</comment>
<comment type="catalytic activity">
    <reaction evidence="3">
        <text>Catalyzes the rearrangement of -S-S- bonds in proteins.</text>
        <dbReference type="EC" id="5.3.4.1"/>
    </reaction>
</comment>
<comment type="subcellular location">
    <subcellularLocation>
        <location evidence="6">Membrane</location>
        <topology evidence="6">Multi-pass membrane protein</topology>
    </subcellularLocation>
</comment>
<comment type="similarity">
    <text evidence="6">Belongs to the CRELD family.</text>
</comment>
<sequence length="420" mass="45697">MAPQPLRGLVPFLLWCLSLFLSLPGPVWLQPSPPPHSAPRAEPHPCHTCRALVDSFNKGLERTIRDNFGGGNTAWEEEKLSKYKDSETRLVEVLEGVCSKSDFECHRLLELSEELVEAWWFHRQQEAPDLFQWLCSDSLKLCCPSGTFGPSCLPCPGGTERPCGGYGQCEGEGTRGGSGHCDCQAGYGGEACGQCGLGYFEAERNSSHLVCSACFGPCARCTGPEESHCLQCRKGWALHHLKCVDIDECGTEQATCGAAQFCVNTEGSYECRDCAKACLGCMGAGPGRCKKCSRGYQQVGSKCLDVDECETVVCPGENEQCENTEGSYRCVCAEGFRQEDGICVKEQIPESAGFFAEMTEDEMVVLQQMFFGVIICALATLAAKGDLVFTAIFIGAVAAMTGYWLSERSDRVLEGFIKGR</sequence>
<gene>
    <name type="primary">Creld1</name>
</gene>
<accession>Q4V7F2</accession>
<keyword id="KW-0106">Calcium</keyword>
<keyword id="KW-1015">Disulfide bond</keyword>
<keyword id="KW-0245">EGF-like domain</keyword>
<keyword id="KW-0325">Glycoprotein</keyword>
<keyword id="KW-0413">Isomerase</keyword>
<keyword id="KW-0472">Membrane</keyword>
<keyword id="KW-0676">Redox-active center</keyword>
<keyword id="KW-1185">Reference proteome</keyword>
<keyword id="KW-0677">Repeat</keyword>
<keyword id="KW-0732">Signal</keyword>
<keyword id="KW-0812">Transmembrane</keyword>
<keyword id="KW-1133">Transmembrane helix</keyword>